<keyword id="KW-1015">Disulfide bond</keyword>
<keyword id="KW-0281">Fimbrium</keyword>
<keyword id="KW-0732">Signal</keyword>
<proteinExistence type="evidence at protein level"/>
<name>SFAA_ECOL5</name>
<gene>
    <name type="primary">sfaA</name>
    <name type="ordered locus">ECP_0293</name>
</gene>
<reference key="1">
    <citation type="journal article" date="1987" name="FEMS Microbiol. Lett.">
        <title>Nucleotide sequence of the sfaA gene coding for the S-fimbrial protein subunit of Escherichia coli.</title>
        <authorList>
            <person name="Schmoll T."/>
            <person name="Hacker J."/>
            <person name="Goebel W."/>
        </authorList>
    </citation>
    <scope>NUCLEOTIDE SEQUENCE [GENOMIC DNA]</scope>
</reference>
<reference key="2">
    <citation type="journal article" date="2006" name="Mol. Microbiol.">
        <title>Role of pathogenicity island-associated integrases in the genome plasticity of uropathogenic Escherichia coli strain 536.</title>
        <authorList>
            <person name="Hochhut B."/>
            <person name="Wilde C."/>
            <person name="Balling G."/>
            <person name="Middendorf B."/>
            <person name="Dobrindt U."/>
            <person name="Brzuszkiewicz E."/>
            <person name="Gottschalk G."/>
            <person name="Carniel E."/>
            <person name="Hacker J."/>
        </authorList>
    </citation>
    <scope>NUCLEOTIDE SEQUENCE [LARGE SCALE GENOMIC DNA]</scope>
    <source>
        <strain>536 / UPEC</strain>
    </source>
</reference>
<reference key="3">
    <citation type="journal article" date="1989" name="Mol. Microbiol.">
        <title>Analysis of genes coding for the sialic acid-binding adhesin and two other minor fimbrial subunits of the S-fimbrial adhesin determinant of Escherichia coli.</title>
        <authorList>
            <person name="Schmoll T."/>
            <person name="Hoschuetzky H."/>
            <person name="Morschhaeuser J."/>
            <person name="Lottspeich F."/>
            <person name="Jann K."/>
            <person name="Hacker J."/>
        </authorList>
    </citation>
    <scope>SUBCELLULAR LOCATION</scope>
    <scope>IDENTIFICATION IN FIMBRIAE COMPLEX</scope>
    <scope>DISRUPTION PHENOTYPE</scope>
</reference>
<organism>
    <name type="scientific">Escherichia coli O6:K15:H31 (strain 536 / UPEC)</name>
    <dbReference type="NCBI Taxonomy" id="362663"/>
    <lineage>
        <taxon>Bacteria</taxon>
        <taxon>Pseudomonadati</taxon>
        <taxon>Pseudomonadota</taxon>
        <taxon>Gammaproteobacteria</taxon>
        <taxon>Enterobacterales</taxon>
        <taxon>Enterobacteriaceae</taxon>
        <taxon>Escherichia</taxon>
    </lineage>
</organism>
<dbReference type="EMBL" id="M35273">
    <property type="protein sequence ID" value="AAA24626.1"/>
    <property type="molecule type" value="Genomic_DNA"/>
</dbReference>
<dbReference type="EMBL" id="X17420">
    <property type="protein sequence ID" value="CAA35468.1"/>
    <property type="molecule type" value="Genomic_DNA"/>
</dbReference>
<dbReference type="EMBL" id="CP000247">
    <property type="protein sequence ID" value="ABG68328.1"/>
    <property type="molecule type" value="Genomic_DNA"/>
</dbReference>
<dbReference type="PIR" id="S00352">
    <property type="entry name" value="YQECFA"/>
</dbReference>
<dbReference type="RefSeq" id="WP_000768216.1">
    <property type="nucleotide sequence ID" value="NC_008253.1"/>
</dbReference>
<dbReference type="SMR" id="P12730"/>
<dbReference type="KEGG" id="ecp:ECP_0293"/>
<dbReference type="HOGENOM" id="CLU_088965_0_0_6"/>
<dbReference type="Proteomes" id="UP000009182">
    <property type="component" value="Chromosome"/>
</dbReference>
<dbReference type="GO" id="GO:0009289">
    <property type="term" value="C:pilus"/>
    <property type="evidence" value="ECO:0007669"/>
    <property type="project" value="UniProtKB-SubCell"/>
</dbReference>
<dbReference type="GO" id="GO:0043709">
    <property type="term" value="P:cell adhesion involved in single-species biofilm formation"/>
    <property type="evidence" value="ECO:0007669"/>
    <property type="project" value="TreeGrafter"/>
</dbReference>
<dbReference type="FunFam" id="2.60.40.1090:FF:000001">
    <property type="entry name" value="Type-1 fimbrial major subunit"/>
    <property type="match status" value="1"/>
</dbReference>
<dbReference type="Gene3D" id="2.60.40.1090">
    <property type="entry name" value="Fimbrial-type adhesion domain"/>
    <property type="match status" value="1"/>
</dbReference>
<dbReference type="InterPro" id="IPR000259">
    <property type="entry name" value="Adhesion_dom_fimbrial"/>
</dbReference>
<dbReference type="InterPro" id="IPR036937">
    <property type="entry name" value="Adhesion_dom_fimbrial_sf"/>
</dbReference>
<dbReference type="InterPro" id="IPR008966">
    <property type="entry name" value="Adhesion_dom_sf"/>
</dbReference>
<dbReference type="InterPro" id="IPR050263">
    <property type="entry name" value="Bact_Fimbrial_Adh_Pro"/>
</dbReference>
<dbReference type="NCBIfam" id="NF011741">
    <property type="entry name" value="PRK15194.1"/>
    <property type="match status" value="1"/>
</dbReference>
<dbReference type="PANTHER" id="PTHR33420">
    <property type="entry name" value="FIMBRIAL SUBUNIT ELFA-RELATED"/>
    <property type="match status" value="1"/>
</dbReference>
<dbReference type="PANTHER" id="PTHR33420:SF12">
    <property type="entry name" value="FIMBRIN-LIKE PROTEIN FIMI-RELATED"/>
    <property type="match status" value="1"/>
</dbReference>
<dbReference type="Pfam" id="PF00419">
    <property type="entry name" value="Fimbrial"/>
    <property type="match status" value="1"/>
</dbReference>
<dbReference type="SUPFAM" id="SSF49401">
    <property type="entry name" value="Bacterial adhesins"/>
    <property type="match status" value="1"/>
</dbReference>
<sequence>MKLKFISMAVFSALTLGVATNASAVTTVNGGTVHFKGEVVDAACAVNTNSANQTVLLGQVRSAKLANDGEKSSPVGFSIELNDCSSATAGHASIIFAGNVIATHNDVLSLQNSAAGSATNVGIQILDHTGTAVQFDGVTASTQFTLTDGTNKIPFQAVYYATGKSTPGIANADATFKVQYQ</sequence>
<comment type="function">
    <text>Fimbriae (also called pili), polar filaments radiating from the surface of the bacterium to a length of 0.5-1.5 micrometers and numbering 100-300 per cell, enable bacteria to colonize the epithelium of specific host organs.</text>
</comment>
<comment type="function">
    <text>The major fimbrial subunit. Interacts with alpha-sialic acid-(2-3)-beta-Gal containing receptors. It belongs to the group of Mrh (Mannose-resistant hemagglutination) fimbrial proteins.</text>
</comment>
<comment type="subcellular location">
    <subcellularLocation>
        <location evidence="2">Fimbrium</location>
    </subcellularLocation>
</comment>
<comment type="disruption phenotype">
    <text evidence="2">Deletion leads to loss of fimbriation and a decrease of hemagglutination.</text>
</comment>
<comment type="miscellaneous">
    <text>This protein belongs to the group of SfA (S-fimbrial adhesins), which are associated with uropathogenic strains and with strains causing newborn meningitis.</text>
</comment>
<comment type="similarity">
    <text evidence="3">Belongs to the fimbrial protein family.</text>
</comment>
<protein>
    <recommendedName>
        <fullName>S-fimbrial protein subunit SfaA</fullName>
    </recommendedName>
    <alternativeName>
        <fullName>S-fimbrillin</fullName>
    </alternativeName>
</protein>
<evidence type="ECO:0000255" key="1"/>
<evidence type="ECO:0000269" key="2">
    <source>
    </source>
</evidence>
<evidence type="ECO:0000305" key="3"/>
<feature type="signal peptide" evidence="1">
    <location>
        <begin position="1"/>
        <end position="24"/>
    </location>
</feature>
<feature type="chain" id="PRO_0000009200" description="S-fimbrial protein subunit SfaA">
    <location>
        <begin position="25"/>
        <end position="181"/>
    </location>
</feature>
<feature type="disulfide bond" evidence="3">
    <location>
        <begin position="44"/>
        <end position="84"/>
    </location>
</feature>
<feature type="sequence conflict" description="In Ref. 1; AAA24626/CAA35468." evidence="3" ref="1">
    <original>VLL</original>
    <variation>FS</variation>
    <location>
        <begin position="55"/>
        <end position="57"/>
    </location>
</feature>
<accession>P12730</accession>
<accession>Q0TL53</accession>